<sequence length="225" mass="25543">MMYHIPGVLSPQDVARFREQLEQAEWVDGRVTTGAQGAQVKNNQQVDTRSTLYAALQNEVLNAVNQHALFFAAALPRTLSTPLFNRYQNNETYGFHVDGAVRSHPQSGWMRTDLSATLFLSDPQSYDGGELVVNDTFGQHRVKLPAGDLVLYPSSSLHCVTPVTRGVRVASFMWIQSMIRDDKKRAMLFELDKNIQSLKSRYGENEEILSLLNLYHNLLREWSEI</sequence>
<accession>B2TVC6</accession>
<protein>
    <recommendedName>
        <fullName evidence="1">PKHD-type hydroxylase YbiX</fullName>
        <ecNumber evidence="1">1.14.11.-</ecNumber>
    </recommendedName>
</protein>
<proteinExistence type="inferred from homology"/>
<reference key="1">
    <citation type="submission" date="2008-05" db="EMBL/GenBank/DDBJ databases">
        <title>Complete sequence of Shigella boydii serotype 18 strain BS512.</title>
        <authorList>
            <person name="Rasko D.A."/>
            <person name="Rosovitz M."/>
            <person name="Maurelli A.T."/>
            <person name="Myers G."/>
            <person name="Seshadri R."/>
            <person name="Cer R."/>
            <person name="Jiang L."/>
            <person name="Ravel J."/>
            <person name="Sebastian Y."/>
        </authorList>
    </citation>
    <scope>NUCLEOTIDE SEQUENCE [LARGE SCALE GENOMIC DNA]</scope>
    <source>
        <strain>CDC 3083-94 / BS512</strain>
    </source>
</reference>
<comment type="cofactor">
    <cofactor evidence="1">
        <name>Fe(2+)</name>
        <dbReference type="ChEBI" id="CHEBI:29033"/>
    </cofactor>
    <text evidence="1">Binds 1 Fe(2+) ion per subunit.</text>
</comment>
<comment type="cofactor">
    <cofactor evidence="1">
        <name>L-ascorbate</name>
        <dbReference type="ChEBI" id="CHEBI:38290"/>
    </cofactor>
</comment>
<keyword id="KW-0223">Dioxygenase</keyword>
<keyword id="KW-0408">Iron</keyword>
<keyword id="KW-0479">Metal-binding</keyword>
<keyword id="KW-0560">Oxidoreductase</keyword>
<keyword id="KW-1185">Reference proteome</keyword>
<keyword id="KW-0847">Vitamin C</keyword>
<gene>
    <name evidence="1" type="primary">ybiX</name>
    <name type="ordered locus">SbBS512_E2548</name>
</gene>
<feature type="chain" id="PRO_1000131220" description="PKHD-type hydroxylase YbiX">
    <location>
        <begin position="1"/>
        <end position="225"/>
    </location>
</feature>
<feature type="domain" description="Fe2OG dioxygenase" evidence="1">
    <location>
        <begin position="78"/>
        <end position="177"/>
    </location>
</feature>
<feature type="binding site" evidence="1">
    <location>
        <position position="96"/>
    </location>
    <ligand>
        <name>Fe cation</name>
        <dbReference type="ChEBI" id="CHEBI:24875"/>
    </ligand>
</feature>
<feature type="binding site" evidence="1">
    <location>
        <position position="98"/>
    </location>
    <ligand>
        <name>Fe cation</name>
        <dbReference type="ChEBI" id="CHEBI:24875"/>
    </ligand>
</feature>
<feature type="binding site" evidence="1">
    <location>
        <position position="158"/>
    </location>
    <ligand>
        <name>Fe cation</name>
        <dbReference type="ChEBI" id="CHEBI:24875"/>
    </ligand>
</feature>
<feature type="binding site" evidence="1">
    <location>
        <position position="168"/>
    </location>
    <ligand>
        <name>2-oxoglutarate</name>
        <dbReference type="ChEBI" id="CHEBI:16810"/>
    </ligand>
</feature>
<organism>
    <name type="scientific">Shigella boydii serotype 18 (strain CDC 3083-94 / BS512)</name>
    <dbReference type="NCBI Taxonomy" id="344609"/>
    <lineage>
        <taxon>Bacteria</taxon>
        <taxon>Pseudomonadati</taxon>
        <taxon>Pseudomonadota</taxon>
        <taxon>Gammaproteobacteria</taxon>
        <taxon>Enterobacterales</taxon>
        <taxon>Enterobacteriaceae</taxon>
        <taxon>Shigella</taxon>
    </lineage>
</organism>
<name>YBIX_SHIB3</name>
<evidence type="ECO:0000255" key="1">
    <source>
        <dbReference type="HAMAP-Rule" id="MF_00657"/>
    </source>
</evidence>
<dbReference type="EC" id="1.14.11.-" evidence="1"/>
<dbReference type="EMBL" id="CP001063">
    <property type="protein sequence ID" value="ACD07927.1"/>
    <property type="molecule type" value="Genomic_DNA"/>
</dbReference>
<dbReference type="RefSeq" id="WP_000990184.1">
    <property type="nucleotide sequence ID" value="NC_010658.1"/>
</dbReference>
<dbReference type="SMR" id="B2TVC6"/>
<dbReference type="STRING" id="344609.SbBS512_E2548"/>
<dbReference type="KEGG" id="sbc:SbBS512_E2548"/>
<dbReference type="HOGENOM" id="CLU_106663_0_0_6"/>
<dbReference type="Proteomes" id="UP000001030">
    <property type="component" value="Chromosome"/>
</dbReference>
<dbReference type="GO" id="GO:0016706">
    <property type="term" value="F:2-oxoglutarate-dependent dioxygenase activity"/>
    <property type="evidence" value="ECO:0007669"/>
    <property type="project" value="UniProtKB-UniRule"/>
</dbReference>
<dbReference type="GO" id="GO:0005506">
    <property type="term" value="F:iron ion binding"/>
    <property type="evidence" value="ECO:0007669"/>
    <property type="project" value="UniProtKB-UniRule"/>
</dbReference>
<dbReference type="GO" id="GO:0031418">
    <property type="term" value="F:L-ascorbic acid binding"/>
    <property type="evidence" value="ECO:0007669"/>
    <property type="project" value="UniProtKB-KW"/>
</dbReference>
<dbReference type="GO" id="GO:0006974">
    <property type="term" value="P:DNA damage response"/>
    <property type="evidence" value="ECO:0007669"/>
    <property type="project" value="TreeGrafter"/>
</dbReference>
<dbReference type="GO" id="GO:0006879">
    <property type="term" value="P:intracellular iron ion homeostasis"/>
    <property type="evidence" value="ECO:0007669"/>
    <property type="project" value="TreeGrafter"/>
</dbReference>
<dbReference type="FunFam" id="2.60.120.620:FF:000006">
    <property type="entry name" value="PKHD-type hydroxylase YbiX"/>
    <property type="match status" value="1"/>
</dbReference>
<dbReference type="FunFam" id="4.10.860.20:FF:000001">
    <property type="entry name" value="PKHD-type hydroxylase YbiX"/>
    <property type="match status" value="1"/>
</dbReference>
<dbReference type="Gene3D" id="2.60.120.620">
    <property type="entry name" value="q2cbj1_9rhob like domain"/>
    <property type="match status" value="1"/>
</dbReference>
<dbReference type="Gene3D" id="4.10.860.20">
    <property type="entry name" value="Rabenosyn, Rab binding domain"/>
    <property type="match status" value="1"/>
</dbReference>
<dbReference type="HAMAP" id="MF_00657">
    <property type="entry name" value="Hydroxyl_YbiX"/>
    <property type="match status" value="1"/>
</dbReference>
<dbReference type="InterPro" id="IPR005123">
    <property type="entry name" value="Oxoglu/Fe-dep_dioxygenase_dom"/>
</dbReference>
<dbReference type="InterPro" id="IPR041097">
    <property type="entry name" value="PKHD_C"/>
</dbReference>
<dbReference type="InterPro" id="IPR023550">
    <property type="entry name" value="PKHD_hydroxylase"/>
</dbReference>
<dbReference type="InterPro" id="IPR006620">
    <property type="entry name" value="Pro_4_hyd_alph"/>
</dbReference>
<dbReference type="InterPro" id="IPR044862">
    <property type="entry name" value="Pro_4_hyd_alph_FE2OG_OXY"/>
</dbReference>
<dbReference type="NCBIfam" id="NF003972">
    <property type="entry name" value="PRK05467.1-1"/>
    <property type="match status" value="1"/>
</dbReference>
<dbReference type="NCBIfam" id="NF003974">
    <property type="entry name" value="PRK05467.1-3"/>
    <property type="match status" value="1"/>
</dbReference>
<dbReference type="NCBIfam" id="NF003975">
    <property type="entry name" value="PRK05467.1-4"/>
    <property type="match status" value="1"/>
</dbReference>
<dbReference type="PANTHER" id="PTHR41536">
    <property type="entry name" value="PKHD-TYPE HYDROXYLASE YBIX"/>
    <property type="match status" value="1"/>
</dbReference>
<dbReference type="PANTHER" id="PTHR41536:SF1">
    <property type="entry name" value="PKHD-TYPE HYDROXYLASE YBIX"/>
    <property type="match status" value="1"/>
</dbReference>
<dbReference type="Pfam" id="PF13640">
    <property type="entry name" value="2OG-FeII_Oxy_3"/>
    <property type="match status" value="1"/>
</dbReference>
<dbReference type="Pfam" id="PF18331">
    <property type="entry name" value="PKHD_C"/>
    <property type="match status" value="1"/>
</dbReference>
<dbReference type="SMART" id="SM00702">
    <property type="entry name" value="P4Hc"/>
    <property type="match status" value="1"/>
</dbReference>
<dbReference type="SUPFAM" id="SSF51197">
    <property type="entry name" value="Clavaminate synthase-like"/>
    <property type="match status" value="1"/>
</dbReference>
<dbReference type="PROSITE" id="PS51471">
    <property type="entry name" value="FE2OG_OXY"/>
    <property type="match status" value="1"/>
</dbReference>